<accession>P61398</accession>
<gene>
    <name evidence="1" type="primary">dltC</name>
    <name type="ordered locus">BCE_1485</name>
</gene>
<sequence length="79" mass="9261">MAEFKEQVLDILEEVCENDIVKENLDVQLFEEGILDSFAVVSLLVEFQERLDIEVSISDFDRDEWATPNMVIKKLEEIR</sequence>
<evidence type="ECO:0000255" key="1">
    <source>
        <dbReference type="HAMAP-Rule" id="MF_00565"/>
    </source>
</evidence>
<organism>
    <name type="scientific">Bacillus cereus (strain ATCC 10987 / NRS 248)</name>
    <dbReference type="NCBI Taxonomy" id="222523"/>
    <lineage>
        <taxon>Bacteria</taxon>
        <taxon>Bacillati</taxon>
        <taxon>Bacillota</taxon>
        <taxon>Bacilli</taxon>
        <taxon>Bacillales</taxon>
        <taxon>Bacillaceae</taxon>
        <taxon>Bacillus</taxon>
        <taxon>Bacillus cereus group</taxon>
    </lineage>
</organism>
<proteinExistence type="inferred from homology"/>
<feature type="chain" id="PRO_0000213083" description="D-alanyl carrier protein">
    <location>
        <begin position="1"/>
        <end position="79"/>
    </location>
</feature>
<feature type="domain" description="Carrier" evidence="1">
    <location>
        <begin position="2"/>
        <end position="79"/>
    </location>
</feature>
<feature type="modified residue" description="O-(pantetheine 4'-phosphoryl)serine" evidence="1">
    <location>
        <position position="37"/>
    </location>
</feature>
<protein>
    <recommendedName>
        <fullName evidence="1">D-alanyl carrier protein</fullName>
        <shortName evidence="1">DCP</shortName>
    </recommendedName>
    <alternativeName>
        <fullName evidence="1">D-alanine--poly(phosphoribitol) ligase subunit 2</fullName>
    </alternativeName>
</protein>
<dbReference type="EMBL" id="AE017194">
    <property type="protein sequence ID" value="AAS40414.1"/>
    <property type="molecule type" value="Genomic_DNA"/>
</dbReference>
<dbReference type="SMR" id="P61398"/>
<dbReference type="KEGG" id="bca:BCE_1485"/>
<dbReference type="HOGENOM" id="CLU_108696_19_0_9"/>
<dbReference type="UniPathway" id="UPA00556"/>
<dbReference type="Proteomes" id="UP000002527">
    <property type="component" value="Chromosome"/>
</dbReference>
<dbReference type="GO" id="GO:0005737">
    <property type="term" value="C:cytoplasm"/>
    <property type="evidence" value="ECO:0007669"/>
    <property type="project" value="UniProtKB-SubCell"/>
</dbReference>
<dbReference type="GO" id="GO:0036370">
    <property type="term" value="F:D-alanyl carrier activity"/>
    <property type="evidence" value="ECO:0007669"/>
    <property type="project" value="UniProtKB-UniRule"/>
</dbReference>
<dbReference type="GO" id="GO:0071555">
    <property type="term" value="P:cell wall organization"/>
    <property type="evidence" value="ECO:0007669"/>
    <property type="project" value="UniProtKB-KW"/>
</dbReference>
<dbReference type="GO" id="GO:0070395">
    <property type="term" value="P:lipoteichoic acid biosynthetic process"/>
    <property type="evidence" value="ECO:0007669"/>
    <property type="project" value="UniProtKB-UniRule"/>
</dbReference>
<dbReference type="FunFam" id="1.10.1200.10:FF:000004">
    <property type="entry name" value="D-alanyl carrier protein"/>
    <property type="match status" value="1"/>
</dbReference>
<dbReference type="Gene3D" id="1.10.1200.10">
    <property type="entry name" value="ACP-like"/>
    <property type="match status" value="1"/>
</dbReference>
<dbReference type="HAMAP" id="MF_00565">
    <property type="entry name" value="DltC"/>
    <property type="match status" value="1"/>
</dbReference>
<dbReference type="InterPro" id="IPR036736">
    <property type="entry name" value="ACP-like_sf"/>
</dbReference>
<dbReference type="InterPro" id="IPR003230">
    <property type="entry name" value="DltC"/>
</dbReference>
<dbReference type="InterPro" id="IPR009081">
    <property type="entry name" value="PP-bd_ACP"/>
</dbReference>
<dbReference type="NCBIfam" id="TIGR01688">
    <property type="entry name" value="dltC"/>
    <property type="match status" value="1"/>
</dbReference>
<dbReference type="NCBIfam" id="NF003464">
    <property type="entry name" value="PRK05087.1"/>
    <property type="match status" value="1"/>
</dbReference>
<dbReference type="Pfam" id="PF00550">
    <property type="entry name" value="PP-binding"/>
    <property type="match status" value="1"/>
</dbReference>
<dbReference type="SUPFAM" id="SSF47336">
    <property type="entry name" value="ACP-like"/>
    <property type="match status" value="1"/>
</dbReference>
<dbReference type="PROSITE" id="PS50075">
    <property type="entry name" value="CARRIER"/>
    <property type="match status" value="1"/>
</dbReference>
<keyword id="KW-0961">Cell wall biogenesis/degradation</keyword>
<keyword id="KW-0963">Cytoplasm</keyword>
<keyword id="KW-0596">Phosphopantetheine</keyword>
<keyword id="KW-0597">Phosphoprotein</keyword>
<comment type="function">
    <text evidence="1">Carrier protein involved in the D-alanylation of lipoteichoic acid (LTA). The loading of thioester-linked D-alanine onto DltC is catalyzed by D-alanine--D-alanyl carrier protein ligase DltA. The DltC-carried D-alanyl group is further transferred to cell membrane phosphatidylglycerol (PG) by forming an ester bond, probably catalyzed by DltD. D-alanylation of LTA plays an important role in modulating the properties of the cell wall in Gram-positive bacteria, influencing the net charge of the cell wall.</text>
</comment>
<comment type="pathway">
    <text evidence="1">Cell wall biogenesis; lipoteichoic acid biosynthesis.</text>
</comment>
<comment type="subcellular location">
    <subcellularLocation>
        <location evidence="1">Cytoplasm</location>
    </subcellularLocation>
</comment>
<comment type="PTM">
    <text evidence="1">4'-phosphopantetheine is transferred from CoA to a specific serine of apo-DCP.</text>
</comment>
<comment type="similarity">
    <text evidence="1">Belongs to the DltC family.</text>
</comment>
<reference key="1">
    <citation type="journal article" date="2004" name="Nucleic Acids Res.">
        <title>The genome sequence of Bacillus cereus ATCC 10987 reveals metabolic adaptations and a large plasmid related to Bacillus anthracis pXO1.</title>
        <authorList>
            <person name="Rasko D.A."/>
            <person name="Ravel J."/>
            <person name="Oekstad O.A."/>
            <person name="Helgason E."/>
            <person name="Cer R.Z."/>
            <person name="Jiang L."/>
            <person name="Shores K.A."/>
            <person name="Fouts D.E."/>
            <person name="Tourasse N.J."/>
            <person name="Angiuoli S.V."/>
            <person name="Kolonay J.F."/>
            <person name="Nelson W.C."/>
            <person name="Kolstoe A.-B."/>
            <person name="Fraser C.M."/>
            <person name="Read T.D."/>
        </authorList>
    </citation>
    <scope>NUCLEOTIDE SEQUENCE [LARGE SCALE GENOMIC DNA]</scope>
    <source>
        <strain>ATCC 10987 / NRS 248</strain>
    </source>
</reference>
<name>DLTC_BACC1</name>